<gene>
    <name evidence="1" type="primary">atpF</name>
</gene>
<protein>
    <recommendedName>
        <fullName evidence="1">ATP synthase subunit b</fullName>
    </recommendedName>
    <alternativeName>
        <fullName evidence="1">ATP synthase F(0) sector subunit b</fullName>
    </alternativeName>
    <alternativeName>
        <fullName evidence="1">ATPase subunit I</fullName>
    </alternativeName>
    <alternativeName>
        <fullName evidence="1">F-type ATPase subunit b</fullName>
        <shortName evidence="1">F-ATPase subunit b</shortName>
    </alternativeName>
</protein>
<feature type="chain" id="PRO_0000082394" description="ATP synthase subunit b">
    <location>
        <begin position="1"/>
        <end position="159"/>
    </location>
</feature>
<feature type="transmembrane region" description="Helical" evidence="1">
    <location>
        <begin position="4"/>
        <end position="24"/>
    </location>
</feature>
<dbReference type="EMBL" id="M81087">
    <property type="protein sequence ID" value="AAA53123.1"/>
    <property type="molecule type" value="Genomic_DNA"/>
</dbReference>
<dbReference type="SMR" id="P41172"/>
<dbReference type="GO" id="GO:0005886">
    <property type="term" value="C:plasma membrane"/>
    <property type="evidence" value="ECO:0007669"/>
    <property type="project" value="UniProtKB-SubCell"/>
</dbReference>
<dbReference type="GO" id="GO:0045259">
    <property type="term" value="C:proton-transporting ATP synthase complex"/>
    <property type="evidence" value="ECO:0007669"/>
    <property type="project" value="UniProtKB-KW"/>
</dbReference>
<dbReference type="GO" id="GO:0046933">
    <property type="term" value="F:proton-transporting ATP synthase activity, rotational mechanism"/>
    <property type="evidence" value="ECO:0007669"/>
    <property type="project" value="UniProtKB-UniRule"/>
</dbReference>
<dbReference type="GO" id="GO:0046961">
    <property type="term" value="F:proton-transporting ATPase activity, rotational mechanism"/>
    <property type="evidence" value="ECO:0007669"/>
    <property type="project" value="TreeGrafter"/>
</dbReference>
<dbReference type="CDD" id="cd06503">
    <property type="entry name" value="ATP-synt_Fo_b"/>
    <property type="match status" value="1"/>
</dbReference>
<dbReference type="Gene3D" id="1.20.5.620">
    <property type="entry name" value="F1F0 ATP synthase subunit B, membrane domain"/>
    <property type="match status" value="1"/>
</dbReference>
<dbReference type="HAMAP" id="MF_01398">
    <property type="entry name" value="ATP_synth_b_bprime"/>
    <property type="match status" value="1"/>
</dbReference>
<dbReference type="InterPro" id="IPR028987">
    <property type="entry name" value="ATP_synth_B-like_membr_sf"/>
</dbReference>
<dbReference type="InterPro" id="IPR002146">
    <property type="entry name" value="ATP_synth_b/b'su_bac/chlpt"/>
</dbReference>
<dbReference type="InterPro" id="IPR005864">
    <property type="entry name" value="ATP_synth_F0_bsu_bac"/>
</dbReference>
<dbReference type="InterPro" id="IPR050059">
    <property type="entry name" value="ATP_synthase_B_chain"/>
</dbReference>
<dbReference type="NCBIfam" id="TIGR01144">
    <property type="entry name" value="ATP_synt_b"/>
    <property type="match status" value="1"/>
</dbReference>
<dbReference type="NCBIfam" id="NF004411">
    <property type="entry name" value="PRK05759.1-2"/>
    <property type="match status" value="1"/>
</dbReference>
<dbReference type="PANTHER" id="PTHR33445:SF1">
    <property type="entry name" value="ATP SYNTHASE SUBUNIT B"/>
    <property type="match status" value="1"/>
</dbReference>
<dbReference type="PANTHER" id="PTHR33445">
    <property type="entry name" value="ATP SYNTHASE SUBUNIT B', CHLOROPLASTIC"/>
    <property type="match status" value="1"/>
</dbReference>
<dbReference type="Pfam" id="PF00430">
    <property type="entry name" value="ATP-synt_B"/>
    <property type="match status" value="1"/>
</dbReference>
<dbReference type="SUPFAM" id="SSF81573">
    <property type="entry name" value="F1F0 ATP synthase subunit B, membrane domain"/>
    <property type="match status" value="1"/>
</dbReference>
<accession>P41172</accession>
<name>ATPF_ACIFI</name>
<comment type="function">
    <text evidence="1">F(1)F(0) ATP synthase produces ATP from ADP in the presence of a proton or sodium gradient. F-type ATPases consist of two structural domains, F(1) containing the extramembraneous catalytic core and F(0) containing the membrane proton channel, linked together by a central stalk and a peripheral stalk. During catalysis, ATP synthesis in the catalytic domain of F(1) is coupled via a rotary mechanism of the central stalk subunits to proton translocation.</text>
</comment>
<comment type="function">
    <text evidence="1">Component of the F(0) channel, it forms part of the peripheral stalk, linking F(1) to F(0).</text>
</comment>
<comment type="subunit">
    <text evidence="1">F-type ATPases have 2 components, F(1) - the catalytic core - and F(0) - the membrane proton channel. F(1) has five subunits: alpha(3), beta(3), gamma(1), delta(1), epsilon(1). F(0) has three main subunits: a(1), b(2) and c(10-14). The alpha and beta chains form an alternating ring which encloses part of the gamma chain. F(1) is attached to F(0) by a central stalk formed by the gamma and epsilon chains, while a peripheral stalk is formed by the delta and b chains.</text>
</comment>
<comment type="subcellular location">
    <subcellularLocation>
        <location evidence="1">Cell inner membrane</location>
        <topology evidence="1">Single-pass membrane protein</topology>
    </subcellularLocation>
</comment>
<comment type="similarity">
    <text evidence="1">Belongs to the ATPase B chain family.</text>
</comment>
<keyword id="KW-0066">ATP synthesis</keyword>
<keyword id="KW-0997">Cell inner membrane</keyword>
<keyword id="KW-1003">Cell membrane</keyword>
<keyword id="KW-0138">CF(0)</keyword>
<keyword id="KW-0375">Hydrogen ion transport</keyword>
<keyword id="KW-0406">Ion transport</keyword>
<keyword id="KW-0472">Membrane</keyword>
<keyword id="KW-0812">Transmembrane</keyword>
<keyword id="KW-1133">Transmembrane helix</keyword>
<keyword id="KW-0813">Transport</keyword>
<organism>
    <name type="scientific">Acidithiobacillus ferridurans</name>
    <dbReference type="NCBI Taxonomy" id="1232575"/>
    <lineage>
        <taxon>Bacteria</taxon>
        <taxon>Pseudomonadati</taxon>
        <taxon>Pseudomonadota</taxon>
        <taxon>Acidithiobacillia</taxon>
        <taxon>Acidithiobacillales</taxon>
        <taxon>Acidithiobacillaceae</taxon>
        <taxon>Acidithiobacillus</taxon>
    </lineage>
</organism>
<proteinExistence type="inferred from homology"/>
<sequence length="159" mass="17885">MNPVGINGTLIVQLVTFVILVALLYKYMYGPLRKVMDDRRAKIADGLAAAERGKEEMALAQKRATELVREAKDKAAEIIANAERRGVELREEAQGKAREEADRIIASARAEIDVETNRAREVLRGQVVELVVNGTQRILHREIDDQTHRDIIDRMVGQL</sequence>
<reference key="1">
    <citation type="journal article" date="1994" name="FEMS Microbiol. Lett.">
        <title>The F1 genes of the F1F0 ATP synthase from the acidophilic bacterium Thiobacillus ferrooxidans complement Escherichia coli F1 unc mutants.</title>
        <authorList>
            <person name="Brown L.D."/>
            <person name="Dennehy M.E."/>
            <person name="Rawlings D.E."/>
        </authorList>
    </citation>
    <scope>NUCLEOTIDE SEQUENCE [GENOMIC DNA]</scope>
    <source>
        <strain>ATCC 33020 / DSM 29468 / JCM 18981 / 11Fe</strain>
    </source>
</reference>
<evidence type="ECO:0000255" key="1">
    <source>
        <dbReference type="HAMAP-Rule" id="MF_01398"/>
    </source>
</evidence>